<name>CT5B_CONAL</name>
<proteinExistence type="evidence at protein level"/>
<organism>
    <name type="scientific">Conus aulicus</name>
    <name type="common">Princely cone</name>
    <dbReference type="NCBI Taxonomy" id="89437"/>
    <lineage>
        <taxon>Eukaryota</taxon>
        <taxon>Metazoa</taxon>
        <taxon>Spiralia</taxon>
        <taxon>Lophotrochozoa</taxon>
        <taxon>Mollusca</taxon>
        <taxon>Gastropoda</taxon>
        <taxon>Caenogastropoda</taxon>
        <taxon>Neogastropoda</taxon>
        <taxon>Conoidea</taxon>
        <taxon>Conidae</taxon>
        <taxon>Conus</taxon>
        <taxon>Darioconus</taxon>
    </lineage>
</organism>
<evidence type="ECO:0000250" key="1"/>
<evidence type="ECO:0000269" key="2">
    <source>
    </source>
</evidence>
<evidence type="ECO:0000303" key="3">
    <source>
    </source>
</evidence>
<evidence type="ECO:0000305" key="4"/>
<evidence type="ECO:0000305" key="5">
    <source>
    </source>
</evidence>
<protein>
    <recommendedName>
        <fullName evidence="3">Conotoxin au5b</fullName>
    </recommendedName>
</protein>
<accession>P58849</accession>
<dbReference type="PIR" id="B59146">
    <property type="entry name" value="B59146"/>
</dbReference>
<dbReference type="ConoServer" id="1735">
    <property type="toxin name" value="AuVB"/>
</dbReference>
<dbReference type="GO" id="GO:0005576">
    <property type="term" value="C:extracellular region"/>
    <property type="evidence" value="ECO:0007669"/>
    <property type="project" value="UniProtKB-SubCell"/>
</dbReference>
<dbReference type="GO" id="GO:0090729">
    <property type="term" value="F:toxin activity"/>
    <property type="evidence" value="ECO:0007669"/>
    <property type="project" value="UniProtKB-KW"/>
</dbReference>
<dbReference type="InterPro" id="IPR012631">
    <property type="entry name" value="Toxin_26"/>
</dbReference>
<dbReference type="Pfam" id="PF08097">
    <property type="entry name" value="Toxin_26"/>
    <property type="match status" value="1"/>
</dbReference>
<keyword id="KW-0903">Direct protein sequencing</keyword>
<keyword id="KW-1015">Disulfide bond</keyword>
<keyword id="KW-0528">Neurotoxin</keyword>
<keyword id="KW-0964">Secreted</keyword>
<keyword id="KW-0800">Toxin</keyword>
<reference key="1">
    <citation type="journal article" date="1999" name="J. Biol. Chem.">
        <title>The T-superfamily of conotoxins.</title>
        <authorList>
            <person name="Walker C.S."/>
            <person name="Steel D."/>
            <person name="Jacobsen R.B."/>
            <person name="Lirazan M.B."/>
            <person name="Cruz L.J."/>
            <person name="Hooper D."/>
            <person name="Shetty R."/>
            <person name="DelaCruz R.C."/>
            <person name="Nielsen J.S."/>
            <person name="Zhou L.M."/>
            <person name="Bandyopadhyay P."/>
            <person name="Craig A.G."/>
            <person name="Olivera B.M."/>
        </authorList>
    </citation>
    <scope>PROTEIN SEQUENCE</scope>
    <scope>MASS SPECTROMETRY</scope>
    <scope>SUBCELLULAR LOCATION</scope>
    <source>
        <tissue>Venom</tissue>
    </source>
</reference>
<reference key="2">
    <citation type="journal article" date="1999" name="J. Biol. Chem.">
        <authorList>
            <person name="Walker C.S."/>
            <person name="Steel D."/>
            <person name="Jacobsen R.B."/>
            <person name="Lirazan M.B."/>
            <person name="Cruz L.J."/>
            <person name="Hooper D."/>
            <person name="Shetty R."/>
            <person name="DelaCruz R.C."/>
            <person name="Nielsen J.S."/>
            <person name="Zhou L.M."/>
            <person name="Bandyopadhyay P."/>
            <person name="Craig A.G."/>
            <person name="Olivera B.M."/>
        </authorList>
    </citation>
    <scope>ERRATUM OF PUBMED:10521453</scope>
</reference>
<comment type="function">
    <text evidence="1">Causes dorsal fins drooping in fish. No effect is observed when injected into mice (By similarity).</text>
</comment>
<comment type="subcellular location">
    <subcellularLocation>
        <location evidence="2">Secreted</location>
    </subcellularLocation>
</comment>
<comment type="tissue specificity">
    <text evidence="5">Expressed by the venom duct.</text>
</comment>
<comment type="domain">
    <text evidence="4">The cysteine framework is V (CC-CC).</text>
</comment>
<comment type="PTM">
    <text evidence="4">Contains 2 disulfide bonds that can be either 'C1-C3, C2-C4' or 'C1-C4, C2-C3', since these disulfide connectivities have been observed for conotoxins with cysteine framework V (for examples, see AC P0DQQ7 and AC P81755).</text>
</comment>
<comment type="mass spectrometry" mass="1388.6" method="LSI" evidence="2"/>
<comment type="similarity">
    <text evidence="4">Belongs to the conotoxin T superfamily.</text>
</comment>
<sequence length="11" mass="1393">FCCPVIRYCCW</sequence>
<feature type="peptide" id="PRO_0000044492" description="Conotoxin au5b">
    <location>
        <begin position="1"/>
        <end position="11"/>
    </location>
</feature>